<sequence length="246" mass="28086">MTMDKSELVQKAKLAEQAERYDDMAAAMKAVTEQGHELSNEERNLLSVAYKNVVGARRSSWRVISSIEQKTERNEKKQQMGKEYREKIEAELQDICNDVLELLDKYLILNATQAESKVFYLKMKGDYFRYLSEVASGENKQTTVSNSQQAYQEAFEISKKEMQPTHPIRLGLALNFSVFYYEILNSPEKACSLAKTAFDEAIAELDTLNEESYKDSTLIMQLLRDNLTLWTSENQGDEGDAGEGEN</sequence>
<comment type="function">
    <text evidence="3">Adapter protein implicated in the regulation of a large spectrum of both general and specialized signaling pathways. Binds to a large number of partners, usually by recognition of a phosphoserine or phosphothreonine motif. Binding generally results in the modulation of the activity of the binding partner. Negative regulator of osteogenesis. Blocks the nuclear translocation of the phosphorylated form (by AKT1) of SRPK2 and antagonizes its stimulatory effect on cyclin D1 expression resulting in blockage of neuronal apoptosis elicited by SRPK2. Negative regulator of signaling cascades that mediate activation of MAP kinases via AKAP13.</text>
</comment>
<comment type="subunit">
    <text evidence="3 5 6 7 8">Homodimer (By similarity). Interacts with SAMSN1 and PRKCE (PubMed:18604201, PubMed:20478393). Interacts with AKAP13. Interacts with SSH1 and TORC2/CRTC2. Interacts with ABL1; the interaction results in cytoplasmic location of ABL1 and inhibition of cABL-mediated apoptosis. Interacts with ROR2 (dimer); the interaction results in phosphorylation of YWHAB on tyrosine residues. Interacts with GAB2. Interacts with YAP1 (phosphorylated form). Interacts with the phosphorylated (by AKT1) form of SRPK2. Interacts with PKA-phosphorylated AANAT. Interacts with MYO1C. Interacts with SIRT2 (By similarity). Interacts with the 'Thr-369' phosphorylated form of DAPK2 (PubMed:26047703). Interacts with PI4KB, TBC1D22A and TBC1D22B. Interacts with the 'Ser-1134' and 'Ser-1161' phosphorylated form of SOS1 (By similarity). Interacts (via phosphorylated form) with YWHAB; this interaction occurs in a protein kinase AKT1-dependent manner (By similarity). Interacts with SLITRK1 (By similarity). Interacts with SYNPO2 (phosphorylated form); YWHAB competes with ACTN2 for interaction with SYNPO2 (PubMed:15883195). Interacts with RIPOR2 (via phosphorylated form); this interaction occurs in a chemokine-dependent manner and does not compete for binding of RIPOR2 with RHOA nor blocks inhibition of RIPOR2-mediated RHOA activity (By similarity). Interacts with MARK2 and MARK3 (By similarity). Interacts with TESK1; the interaction is dependent on the phosphorylation of TESK1 'Ser-439' and inhibits TESK1 kinase activity (By similarity). Interacts with MEFV (By similarity). Interacts with HDAC4 (By similarity). Interacts with ADAM22 (via C-terminus) (By similarity).</text>
</comment>
<comment type="interaction">
    <interactant intactId="EBI-771608">
        <id>Q9CQV8</id>
    </interactant>
    <interactant intactId="EBI-2693710">
        <id>Q5S006</id>
        <label>Lrrk2</label>
    </interactant>
    <organismsDiffer>false</organismsDiffer>
    <experiments>6</experiments>
</comment>
<comment type="interaction">
    <interactant intactId="EBI-771608">
        <id>Q9CQV8</id>
    </interactant>
    <interactant intactId="EBI-298451">
        <id>P16054</id>
        <label>Prkce</label>
    </interactant>
    <organismsDiffer>false</organismsDiffer>
    <experiments>5</experiments>
</comment>
<comment type="interaction">
    <interactant intactId="EBI-771608">
        <id>Q9CQV8</id>
    </interactant>
    <interactant intactId="EBI-7623057">
        <id>Q91YE8</id>
        <label>Synpo2</label>
    </interactant>
    <organismsDiffer>false</organismsDiffer>
    <experiments>3</experiments>
</comment>
<comment type="subcellular location">
    <subcellularLocation>
        <location evidence="3">Cytoplasm</location>
    </subcellularLocation>
    <subcellularLocation>
        <location evidence="3">Melanosome</location>
    </subcellularLocation>
</comment>
<comment type="alternative products">
    <event type="alternative initiation"/>
    <isoform>
        <id>Q9CQV8-1</id>
        <name>Long</name>
        <sequence type="displayed"/>
    </isoform>
    <isoform>
        <id>Q9CQV8-2</id>
        <name>Short</name>
        <sequence type="described" ref="VSP_018634"/>
    </isoform>
</comment>
<comment type="PTM">
    <text evidence="1 9">Isoform alpha differs from isoform beta in being phosphorylated (By similarity). Phosphorylated on Ser-60 by protein kinase C delta type catalytic subunit in a sphingosine-dependent fashion.</text>
</comment>
<comment type="PTM">
    <text evidence="1">Isoform Short contains a N-acetylmethionine at position 1.</text>
</comment>
<comment type="similarity">
    <text evidence="10">Belongs to the 14-3-3 family.</text>
</comment>
<evidence type="ECO:0000250" key="1"/>
<evidence type="ECO:0000250" key="2">
    <source>
        <dbReference type="UniProtKB" id="P27348"/>
    </source>
</evidence>
<evidence type="ECO:0000250" key="3">
    <source>
        <dbReference type="UniProtKB" id="P31946"/>
    </source>
</evidence>
<evidence type="ECO:0000250" key="4">
    <source>
        <dbReference type="UniProtKB" id="P68251"/>
    </source>
</evidence>
<evidence type="ECO:0000269" key="5">
    <source>
    </source>
</evidence>
<evidence type="ECO:0000269" key="6">
    <source>
    </source>
</evidence>
<evidence type="ECO:0000269" key="7">
    <source>
    </source>
</evidence>
<evidence type="ECO:0000269" key="8">
    <source>
    </source>
</evidence>
<evidence type="ECO:0000269" key="9">
    <source>
    </source>
</evidence>
<evidence type="ECO:0000305" key="10"/>
<evidence type="ECO:0007744" key="11">
    <source>
    </source>
</evidence>
<evidence type="ECO:0007829" key="12">
    <source>
        <dbReference type="PDB" id="5WFX"/>
    </source>
</evidence>
<feature type="chain" id="PRO_0000367902" description="14-3-3 protein beta/alpha">
    <location>
        <begin position="1"/>
        <end position="246"/>
    </location>
</feature>
<feature type="initiator methionine" description="Removed; alternate" evidence="3">
    <location>
        <position position="1"/>
    </location>
</feature>
<feature type="chain" id="PRO_0000000005" description="14-3-3 protein beta/alpha, N-terminally processed">
    <location>
        <begin position="2"/>
        <end position="246"/>
    </location>
</feature>
<feature type="site" description="Interaction with phosphoserine on interacting protein" evidence="1">
    <location>
        <position position="58"/>
    </location>
</feature>
<feature type="site" description="Interaction with phosphoserine on interacting protein" evidence="1">
    <location>
        <position position="129"/>
    </location>
</feature>
<feature type="modified residue" description="N-acetylmethionine" evidence="3">
    <location>
        <position position="1"/>
    </location>
</feature>
<feature type="modified residue" description="N-acetylthreonine; in 14-3-3 protein beta/alpha, N-terminally processed" evidence="3">
    <location>
        <position position="2"/>
    </location>
</feature>
<feature type="modified residue" description="Phosphothreonine" evidence="3">
    <location>
        <position position="2"/>
    </location>
</feature>
<feature type="modified residue" description="N6-acetyllysine" evidence="2">
    <location>
        <position position="5"/>
    </location>
</feature>
<feature type="modified residue" description="N6-acetyllysine; alternate" evidence="2">
    <location>
        <position position="51"/>
    </location>
</feature>
<feature type="modified residue" description="Phosphoserine" evidence="9">
    <location>
        <position position="60"/>
    </location>
</feature>
<feature type="modified residue" description="N6-acetyllysine" evidence="3">
    <location>
        <position position="70"/>
    </location>
</feature>
<feature type="modified residue" description="3'-nitrotyrosine" evidence="11">
    <location>
        <position position="84"/>
    </location>
</feature>
<feature type="modified residue" description="3'-nitrotyrosine" evidence="11">
    <location>
        <position position="106"/>
    </location>
</feature>
<feature type="modified residue" description="N6-acetyllysine" evidence="3">
    <location>
        <position position="117"/>
    </location>
</feature>
<feature type="modified residue" description="Phosphoserine" evidence="4">
    <location>
        <position position="186"/>
    </location>
</feature>
<feature type="modified residue" description="Phosphoserine" evidence="3">
    <location>
        <position position="232"/>
    </location>
</feature>
<feature type="cross-link" description="Glycyl lysine isopeptide (Lys-Gly) (interchain with G-Cter in SUMO2); alternate" evidence="2">
    <location>
        <position position="51"/>
    </location>
</feature>
<feature type="splice variant" id="VSP_018634" description="In isoform Short." evidence="10">
    <location>
        <begin position="1"/>
        <end position="2"/>
    </location>
</feature>
<feature type="sequence conflict" description="In Ref. 1; AAC14343." evidence="10" ref="1">
    <original>Q</original>
    <variation>H</variation>
    <location>
        <position position="10"/>
    </location>
</feature>
<feature type="sequence conflict" description="In Ref. 1; AAC14343." evidence="10" ref="1">
    <original>N</original>
    <variation>D</variation>
    <location>
        <position position="74"/>
    </location>
</feature>
<feature type="sequence conflict" description="In Ref. 2; BAE29538/BAE30278." evidence="10" ref="2">
    <original>D</original>
    <variation>Y</variation>
    <location>
        <position position="126"/>
    </location>
</feature>
<feature type="helix" evidence="12">
    <location>
        <begin position="5"/>
        <end position="17"/>
    </location>
</feature>
<feature type="helix" evidence="12">
    <location>
        <begin position="21"/>
        <end position="33"/>
    </location>
</feature>
<feature type="helix" evidence="12">
    <location>
        <begin position="40"/>
        <end position="68"/>
    </location>
</feature>
<feature type="helix" evidence="12">
    <location>
        <begin position="75"/>
        <end position="105"/>
    </location>
</feature>
<feature type="helix" evidence="12">
    <location>
        <begin position="107"/>
        <end position="110"/>
    </location>
</feature>
<feature type="helix" evidence="12">
    <location>
        <begin position="114"/>
        <end position="134"/>
    </location>
</feature>
<feature type="helix" evidence="12">
    <location>
        <begin position="137"/>
        <end position="161"/>
    </location>
</feature>
<feature type="helix" evidence="12">
    <location>
        <begin position="167"/>
        <end position="182"/>
    </location>
</feature>
<feature type="helix" evidence="12">
    <location>
        <begin position="187"/>
        <end position="202"/>
    </location>
</feature>
<feature type="helix" evidence="12">
    <location>
        <begin position="203"/>
        <end position="207"/>
    </location>
</feature>
<feature type="turn" evidence="12">
    <location>
        <begin position="210"/>
        <end position="212"/>
    </location>
</feature>
<feature type="helix" evidence="12">
    <location>
        <begin position="213"/>
        <end position="232"/>
    </location>
</feature>
<feature type="modified residue" description="N-acetylmethionine" evidence="10">
    <location sequence="Q9CQV8-2">
        <position position="1"/>
    </location>
</feature>
<proteinExistence type="evidence at protein level"/>
<gene>
    <name type="primary">Ywhab</name>
</gene>
<accession>Q9CQV8</accession>
<accession>O70455</accession>
<accession>Q3TY33</accession>
<accession>Q3UAN6</accession>
<organism>
    <name type="scientific">Mus musculus</name>
    <name type="common">Mouse</name>
    <dbReference type="NCBI Taxonomy" id="10090"/>
    <lineage>
        <taxon>Eukaryota</taxon>
        <taxon>Metazoa</taxon>
        <taxon>Chordata</taxon>
        <taxon>Craniata</taxon>
        <taxon>Vertebrata</taxon>
        <taxon>Euteleostomi</taxon>
        <taxon>Mammalia</taxon>
        <taxon>Eutheria</taxon>
        <taxon>Euarchontoglires</taxon>
        <taxon>Glires</taxon>
        <taxon>Rodentia</taxon>
        <taxon>Myomorpha</taxon>
        <taxon>Muroidea</taxon>
        <taxon>Muridae</taxon>
        <taxon>Murinae</taxon>
        <taxon>Mus</taxon>
        <taxon>Mus</taxon>
    </lineage>
</organism>
<protein>
    <recommendedName>
        <fullName>14-3-3 protein beta/alpha</fullName>
    </recommendedName>
    <alternativeName>
        <fullName>Protein kinase C inhibitor protein 1</fullName>
        <shortName>KCIP-1</shortName>
    </alternativeName>
    <component>
        <recommendedName>
            <fullName>14-3-3 protein beta/alpha, N-terminally processed</fullName>
        </recommendedName>
    </component>
</protein>
<keyword id="KW-0002">3D-structure</keyword>
<keyword id="KW-0007">Acetylation</keyword>
<keyword id="KW-0024">Alternative initiation</keyword>
<keyword id="KW-0963">Cytoplasm</keyword>
<keyword id="KW-0903">Direct protein sequencing</keyword>
<keyword id="KW-1017">Isopeptide bond</keyword>
<keyword id="KW-0944">Nitration</keyword>
<keyword id="KW-0597">Phosphoprotein</keyword>
<keyword id="KW-1185">Reference proteome</keyword>
<keyword id="KW-0832">Ubl conjugation</keyword>
<name>1433B_MOUSE</name>
<dbReference type="EMBL" id="AF058797">
    <property type="protein sequence ID" value="AAC14343.1"/>
    <property type="molecule type" value="mRNA"/>
</dbReference>
<dbReference type="EMBL" id="AK002632">
    <property type="protein sequence ID" value="BAB22246.1"/>
    <property type="molecule type" value="mRNA"/>
</dbReference>
<dbReference type="EMBL" id="AK004872">
    <property type="protein sequence ID" value="BAB23631.1"/>
    <property type="molecule type" value="mRNA"/>
</dbReference>
<dbReference type="EMBL" id="AK011389">
    <property type="protein sequence ID" value="BAB27587.1"/>
    <property type="molecule type" value="mRNA"/>
</dbReference>
<dbReference type="EMBL" id="AK083367">
    <property type="protein sequence ID" value="BAC38886.1"/>
    <property type="molecule type" value="mRNA"/>
</dbReference>
<dbReference type="EMBL" id="AK144061">
    <property type="protein sequence ID" value="BAE25678.1"/>
    <property type="molecule type" value="mRNA"/>
</dbReference>
<dbReference type="EMBL" id="AK150414">
    <property type="protein sequence ID" value="BAE29538.1"/>
    <property type="molecule type" value="mRNA"/>
</dbReference>
<dbReference type="EMBL" id="AK151294">
    <property type="protein sequence ID" value="BAE30278.1"/>
    <property type="molecule type" value="mRNA"/>
</dbReference>
<dbReference type="EMBL" id="AK158932">
    <property type="protein sequence ID" value="BAE34730.1"/>
    <property type="molecule type" value="mRNA"/>
</dbReference>
<dbReference type="CCDS" id="CCDS17019.1">
    <molecule id="Q9CQV8-1"/>
</dbReference>
<dbReference type="RefSeq" id="NP_001405359.1">
    <molecule id="Q9CQV8-1"/>
    <property type="nucleotide sequence ID" value="NM_001418430.1"/>
</dbReference>
<dbReference type="RefSeq" id="NP_001405362.1">
    <molecule id="Q9CQV8-1"/>
    <property type="nucleotide sequence ID" value="NM_001418433.1"/>
</dbReference>
<dbReference type="RefSeq" id="NP_001405363.1">
    <molecule id="Q9CQV8-1"/>
    <property type="nucleotide sequence ID" value="NM_001418434.1"/>
</dbReference>
<dbReference type="RefSeq" id="NP_061223.2">
    <molecule id="Q9CQV8-1"/>
    <property type="nucleotide sequence ID" value="NM_018753.6"/>
</dbReference>
<dbReference type="RefSeq" id="XP_006499972.1">
    <molecule id="Q9CQV8-1"/>
    <property type="nucleotide sequence ID" value="XM_006499909.3"/>
</dbReference>
<dbReference type="PDB" id="4GNT">
    <property type="method" value="X-ray"/>
    <property type="resolution" value="2.41 A"/>
    <property type="chains" value="A=1-239"/>
</dbReference>
<dbReference type="PDB" id="5F74">
    <property type="method" value="X-ray"/>
    <property type="resolution" value="2.35 A"/>
    <property type="chains" value="A=1-246"/>
</dbReference>
<dbReference type="PDB" id="5WFU">
    <property type="method" value="X-ray"/>
    <property type="resolution" value="1.97 A"/>
    <property type="chains" value="A/B/C/D=1-246"/>
</dbReference>
<dbReference type="PDB" id="5WFX">
    <property type="method" value="X-ray"/>
    <property type="resolution" value="1.65 A"/>
    <property type="chains" value="A/B=1-246"/>
</dbReference>
<dbReference type="PDBsum" id="4GNT"/>
<dbReference type="PDBsum" id="5F74"/>
<dbReference type="PDBsum" id="5WFU"/>
<dbReference type="PDBsum" id="5WFX"/>
<dbReference type="SMR" id="Q9CQV8"/>
<dbReference type="BioGRID" id="207648">
    <property type="interactions" value="87"/>
</dbReference>
<dbReference type="FunCoup" id="Q9CQV8">
    <property type="interactions" value="3834"/>
</dbReference>
<dbReference type="IntAct" id="Q9CQV8">
    <property type="interactions" value="36"/>
</dbReference>
<dbReference type="MINT" id="Q9CQV8"/>
<dbReference type="STRING" id="10090.ENSMUSP00000018470"/>
<dbReference type="GlyGen" id="Q9CQV8">
    <property type="glycosylation" value="1 site, 1 O-linked glycan (1 site)"/>
</dbReference>
<dbReference type="iPTMnet" id="Q9CQV8"/>
<dbReference type="PhosphoSitePlus" id="Q9CQV8"/>
<dbReference type="SwissPalm" id="Q9CQV8"/>
<dbReference type="jPOST" id="Q9CQV8"/>
<dbReference type="PaxDb" id="10090-ENSMUSP00000018470"/>
<dbReference type="PeptideAtlas" id="Q9CQV8"/>
<dbReference type="ProteomicsDB" id="285886">
    <molecule id="Q9CQV8-1"/>
</dbReference>
<dbReference type="ProteomicsDB" id="285887">
    <molecule id="Q9CQV8-2"/>
</dbReference>
<dbReference type="Pumba" id="Q9CQV8"/>
<dbReference type="TopDownProteomics" id="Q9CQV8-1">
    <molecule id="Q9CQV8-1"/>
</dbReference>
<dbReference type="Antibodypedia" id="1906">
    <property type="antibodies" value="696 antibodies from 48 providers"/>
</dbReference>
<dbReference type="DNASU" id="54401"/>
<dbReference type="Ensembl" id="ENSMUST00000018470.10">
    <molecule id="Q9CQV8-1"/>
    <property type="protein sequence ID" value="ENSMUSP00000018470.4"/>
    <property type="gene ID" value="ENSMUSG00000018326.10"/>
</dbReference>
<dbReference type="GeneID" id="54401"/>
<dbReference type="KEGG" id="mmu:54401"/>
<dbReference type="UCSC" id="uc008ntp.1">
    <molecule id="Q9CQV8-1"/>
    <property type="organism name" value="mouse"/>
</dbReference>
<dbReference type="AGR" id="MGI:1891917"/>
<dbReference type="CTD" id="7529"/>
<dbReference type="MGI" id="MGI:1891917">
    <property type="gene designation" value="Ywhab"/>
</dbReference>
<dbReference type="VEuPathDB" id="HostDB:ENSMUSG00000018326"/>
<dbReference type="eggNOG" id="KOG0841">
    <property type="taxonomic scope" value="Eukaryota"/>
</dbReference>
<dbReference type="GeneTree" id="ENSGT01090000260040"/>
<dbReference type="HOGENOM" id="CLU_058290_1_0_1"/>
<dbReference type="InParanoid" id="Q9CQV8"/>
<dbReference type="OMA" id="AECKVFY"/>
<dbReference type="OrthoDB" id="10260625at2759"/>
<dbReference type="PhylomeDB" id="Q9CQV8"/>
<dbReference type="TreeFam" id="TF102003"/>
<dbReference type="Reactome" id="R-MMU-111447">
    <property type="pathway name" value="Activation of BAD and translocation to mitochondria"/>
</dbReference>
<dbReference type="Reactome" id="R-MMU-165159">
    <property type="pathway name" value="MTOR signalling"/>
</dbReference>
<dbReference type="Reactome" id="R-MMU-166208">
    <property type="pathway name" value="mTORC1-mediated signalling"/>
</dbReference>
<dbReference type="Reactome" id="R-MMU-170968">
    <property type="pathway name" value="Frs2-mediated activation"/>
</dbReference>
<dbReference type="Reactome" id="R-MMU-2028269">
    <property type="pathway name" value="Signaling by Hippo"/>
</dbReference>
<dbReference type="Reactome" id="R-MMU-392517">
    <property type="pathway name" value="Rap1 signalling"/>
</dbReference>
<dbReference type="Reactome" id="R-MMU-450385">
    <property type="pathway name" value="Butyrate Response Factor 1 (BRF1) binds and destabilizes mRNA"/>
</dbReference>
<dbReference type="Reactome" id="R-MMU-450513">
    <property type="pathway name" value="Tristetraprolin (TTP, ZFP36) binds and destabilizes mRNA"/>
</dbReference>
<dbReference type="Reactome" id="R-MMU-5625740">
    <property type="pathway name" value="RHO GTPases activate PKNs"/>
</dbReference>
<dbReference type="Reactome" id="R-MMU-5628897">
    <property type="pathway name" value="TP53 Regulates Metabolic Genes"/>
</dbReference>
<dbReference type="Reactome" id="R-MMU-5673000">
    <property type="pathway name" value="RAF activation"/>
</dbReference>
<dbReference type="Reactome" id="R-MMU-5674135">
    <property type="pathway name" value="MAP2K and MAPK activation"/>
</dbReference>
<dbReference type="Reactome" id="R-MMU-5675221">
    <property type="pathway name" value="Negative regulation of MAPK pathway"/>
</dbReference>
<dbReference type="Reactome" id="R-MMU-75035">
    <property type="pathway name" value="Chk1/Chk2(Cds1) mediated inactivation of Cyclin B:Cdk1 complex"/>
</dbReference>
<dbReference type="Reactome" id="R-MMU-9614399">
    <property type="pathway name" value="Regulation of localization of FOXO transcription factors"/>
</dbReference>
<dbReference type="BioGRID-ORCS" id="54401">
    <property type="hits" value="2 hits in 115 CRISPR screens"/>
</dbReference>
<dbReference type="CD-CODE" id="CE726F99">
    <property type="entry name" value="Postsynaptic density"/>
</dbReference>
<dbReference type="ChiTaRS" id="Ywhab">
    <property type="organism name" value="mouse"/>
</dbReference>
<dbReference type="EvolutionaryTrace" id="Q9CQV8"/>
<dbReference type="PRO" id="PR:Q9CQV8"/>
<dbReference type="Proteomes" id="UP000000589">
    <property type="component" value="Chromosome 2"/>
</dbReference>
<dbReference type="RNAct" id="Q9CQV8">
    <property type="molecule type" value="protein"/>
</dbReference>
<dbReference type="Bgee" id="ENSMUSG00000018326">
    <property type="expression patterns" value="Expressed in substantia nigra and 267 other cell types or tissues"/>
</dbReference>
<dbReference type="ExpressionAtlas" id="Q9CQV8">
    <property type="expression patterns" value="baseline and differential"/>
</dbReference>
<dbReference type="GO" id="GO:0005829">
    <property type="term" value="C:cytosol"/>
    <property type="evidence" value="ECO:0000304"/>
    <property type="project" value="Reactome"/>
</dbReference>
<dbReference type="GO" id="GO:0042470">
    <property type="term" value="C:melanosome"/>
    <property type="evidence" value="ECO:0007669"/>
    <property type="project" value="UniProtKB-SubCell"/>
</dbReference>
<dbReference type="GO" id="GO:0005634">
    <property type="term" value="C:nucleus"/>
    <property type="evidence" value="ECO:0007669"/>
    <property type="project" value="Ensembl"/>
</dbReference>
<dbReference type="GO" id="GO:0048471">
    <property type="term" value="C:perinuclear region of cytoplasm"/>
    <property type="evidence" value="ECO:0007669"/>
    <property type="project" value="Ensembl"/>
</dbReference>
<dbReference type="GO" id="GO:0017053">
    <property type="term" value="C:transcription repressor complex"/>
    <property type="evidence" value="ECO:0007669"/>
    <property type="project" value="Ensembl"/>
</dbReference>
<dbReference type="GO" id="GO:0042826">
    <property type="term" value="F:histone deacetylase binding"/>
    <property type="evidence" value="ECO:0007669"/>
    <property type="project" value="Ensembl"/>
</dbReference>
<dbReference type="GO" id="GO:0042802">
    <property type="term" value="F:identical protein binding"/>
    <property type="evidence" value="ECO:0007669"/>
    <property type="project" value="Ensembl"/>
</dbReference>
<dbReference type="GO" id="GO:0050815">
    <property type="term" value="F:phosphoserine residue binding"/>
    <property type="evidence" value="ECO:0007669"/>
    <property type="project" value="Ensembl"/>
</dbReference>
<dbReference type="GO" id="GO:0019904">
    <property type="term" value="F:protein domain specific binding"/>
    <property type="evidence" value="ECO:0000314"/>
    <property type="project" value="MGI"/>
</dbReference>
<dbReference type="GO" id="GO:0004860">
    <property type="term" value="F:protein kinase inhibitor activity"/>
    <property type="evidence" value="ECO:0000250"/>
    <property type="project" value="UniProtKB"/>
</dbReference>
<dbReference type="GO" id="GO:0004864">
    <property type="term" value="F:protein phosphatase inhibitor activity"/>
    <property type="evidence" value="ECO:0007669"/>
    <property type="project" value="Ensembl"/>
</dbReference>
<dbReference type="GO" id="GO:0140311">
    <property type="term" value="F:protein sequestering activity"/>
    <property type="evidence" value="ECO:0007669"/>
    <property type="project" value="Ensembl"/>
</dbReference>
<dbReference type="GO" id="GO:0044877">
    <property type="term" value="F:protein-containing complex binding"/>
    <property type="evidence" value="ECO:0007669"/>
    <property type="project" value="Ensembl"/>
</dbReference>
<dbReference type="GO" id="GO:0045892">
    <property type="term" value="P:negative regulation of DNA-templated transcription"/>
    <property type="evidence" value="ECO:0007669"/>
    <property type="project" value="Ensembl"/>
</dbReference>
<dbReference type="GO" id="GO:0045744">
    <property type="term" value="P:negative regulation of G protein-coupled receptor signaling pathway"/>
    <property type="evidence" value="ECO:0000250"/>
    <property type="project" value="UniProtKB"/>
</dbReference>
<dbReference type="GO" id="GO:0042308">
    <property type="term" value="P:negative regulation of protein import into nucleus"/>
    <property type="evidence" value="ECO:0007669"/>
    <property type="project" value="Ensembl"/>
</dbReference>
<dbReference type="GO" id="GO:0045944">
    <property type="term" value="P:positive regulation of transcription by RNA polymerase II"/>
    <property type="evidence" value="ECO:0007669"/>
    <property type="project" value="Ensembl"/>
</dbReference>
<dbReference type="GO" id="GO:0006605">
    <property type="term" value="P:protein targeting"/>
    <property type="evidence" value="ECO:0000314"/>
    <property type="project" value="MGI"/>
</dbReference>
<dbReference type="FunFam" id="1.20.190.20:FF:000001">
    <property type="entry name" value="14-3-3 gamma 1"/>
    <property type="match status" value="1"/>
</dbReference>
<dbReference type="Gene3D" id="1.20.190.20">
    <property type="entry name" value="14-3-3 domain"/>
    <property type="match status" value="1"/>
</dbReference>
<dbReference type="InterPro" id="IPR000308">
    <property type="entry name" value="14-3-3"/>
</dbReference>
<dbReference type="InterPro" id="IPR023409">
    <property type="entry name" value="14-3-3_CS"/>
</dbReference>
<dbReference type="InterPro" id="IPR036815">
    <property type="entry name" value="14-3-3_dom_sf"/>
</dbReference>
<dbReference type="InterPro" id="IPR023410">
    <property type="entry name" value="14-3-3_domain"/>
</dbReference>
<dbReference type="PANTHER" id="PTHR18860">
    <property type="entry name" value="14-3-3 PROTEIN"/>
    <property type="match status" value="1"/>
</dbReference>
<dbReference type="Pfam" id="PF00244">
    <property type="entry name" value="14-3-3"/>
    <property type="match status" value="1"/>
</dbReference>
<dbReference type="PIRSF" id="PIRSF000868">
    <property type="entry name" value="14-3-3"/>
    <property type="match status" value="1"/>
</dbReference>
<dbReference type="PRINTS" id="PR00305">
    <property type="entry name" value="1433ZETA"/>
</dbReference>
<dbReference type="SMART" id="SM00101">
    <property type="entry name" value="14_3_3"/>
    <property type="match status" value="1"/>
</dbReference>
<dbReference type="SUPFAM" id="SSF48445">
    <property type="entry name" value="14-3-3 protein"/>
    <property type="match status" value="1"/>
</dbReference>
<dbReference type="PROSITE" id="PS00796">
    <property type="entry name" value="1433_1"/>
    <property type="match status" value="1"/>
</dbReference>
<dbReference type="PROSITE" id="PS00797">
    <property type="entry name" value="1433_2"/>
    <property type="match status" value="1"/>
</dbReference>
<reference key="1">
    <citation type="submission" date="1998-04" db="EMBL/GenBank/DDBJ databases">
        <authorList>
            <person name="Karpitskiy V.V."/>
            <person name="Shaw A.S."/>
        </authorList>
    </citation>
    <scope>NUCLEOTIDE SEQUENCE [MRNA]</scope>
    <source>
        <strain>C57BL/6J</strain>
    </source>
</reference>
<reference key="2">
    <citation type="journal article" date="2005" name="Science">
        <title>The transcriptional landscape of the mammalian genome.</title>
        <authorList>
            <person name="Carninci P."/>
            <person name="Kasukawa T."/>
            <person name="Katayama S."/>
            <person name="Gough J."/>
            <person name="Frith M.C."/>
            <person name="Maeda N."/>
            <person name="Oyama R."/>
            <person name="Ravasi T."/>
            <person name="Lenhard B."/>
            <person name="Wells C."/>
            <person name="Kodzius R."/>
            <person name="Shimokawa K."/>
            <person name="Bajic V.B."/>
            <person name="Brenner S.E."/>
            <person name="Batalov S."/>
            <person name="Forrest A.R."/>
            <person name="Zavolan M."/>
            <person name="Davis M.J."/>
            <person name="Wilming L.G."/>
            <person name="Aidinis V."/>
            <person name="Allen J.E."/>
            <person name="Ambesi-Impiombato A."/>
            <person name="Apweiler R."/>
            <person name="Aturaliya R.N."/>
            <person name="Bailey T.L."/>
            <person name="Bansal M."/>
            <person name="Baxter L."/>
            <person name="Beisel K.W."/>
            <person name="Bersano T."/>
            <person name="Bono H."/>
            <person name="Chalk A.M."/>
            <person name="Chiu K.P."/>
            <person name="Choudhary V."/>
            <person name="Christoffels A."/>
            <person name="Clutterbuck D.R."/>
            <person name="Crowe M.L."/>
            <person name="Dalla E."/>
            <person name="Dalrymple B.P."/>
            <person name="de Bono B."/>
            <person name="Della Gatta G."/>
            <person name="di Bernardo D."/>
            <person name="Down T."/>
            <person name="Engstrom P."/>
            <person name="Fagiolini M."/>
            <person name="Faulkner G."/>
            <person name="Fletcher C.F."/>
            <person name="Fukushima T."/>
            <person name="Furuno M."/>
            <person name="Futaki S."/>
            <person name="Gariboldi M."/>
            <person name="Georgii-Hemming P."/>
            <person name="Gingeras T.R."/>
            <person name="Gojobori T."/>
            <person name="Green R.E."/>
            <person name="Gustincich S."/>
            <person name="Harbers M."/>
            <person name="Hayashi Y."/>
            <person name="Hensch T.K."/>
            <person name="Hirokawa N."/>
            <person name="Hill D."/>
            <person name="Huminiecki L."/>
            <person name="Iacono M."/>
            <person name="Ikeo K."/>
            <person name="Iwama A."/>
            <person name="Ishikawa T."/>
            <person name="Jakt M."/>
            <person name="Kanapin A."/>
            <person name="Katoh M."/>
            <person name="Kawasawa Y."/>
            <person name="Kelso J."/>
            <person name="Kitamura H."/>
            <person name="Kitano H."/>
            <person name="Kollias G."/>
            <person name="Krishnan S.P."/>
            <person name="Kruger A."/>
            <person name="Kummerfeld S.K."/>
            <person name="Kurochkin I.V."/>
            <person name="Lareau L.F."/>
            <person name="Lazarevic D."/>
            <person name="Lipovich L."/>
            <person name="Liu J."/>
            <person name="Liuni S."/>
            <person name="McWilliam S."/>
            <person name="Madan Babu M."/>
            <person name="Madera M."/>
            <person name="Marchionni L."/>
            <person name="Matsuda H."/>
            <person name="Matsuzawa S."/>
            <person name="Miki H."/>
            <person name="Mignone F."/>
            <person name="Miyake S."/>
            <person name="Morris K."/>
            <person name="Mottagui-Tabar S."/>
            <person name="Mulder N."/>
            <person name="Nakano N."/>
            <person name="Nakauchi H."/>
            <person name="Ng P."/>
            <person name="Nilsson R."/>
            <person name="Nishiguchi S."/>
            <person name="Nishikawa S."/>
            <person name="Nori F."/>
            <person name="Ohara O."/>
            <person name="Okazaki Y."/>
            <person name="Orlando V."/>
            <person name="Pang K.C."/>
            <person name="Pavan W.J."/>
            <person name="Pavesi G."/>
            <person name="Pesole G."/>
            <person name="Petrovsky N."/>
            <person name="Piazza S."/>
            <person name="Reed J."/>
            <person name="Reid J.F."/>
            <person name="Ring B.Z."/>
            <person name="Ringwald M."/>
            <person name="Rost B."/>
            <person name="Ruan Y."/>
            <person name="Salzberg S.L."/>
            <person name="Sandelin A."/>
            <person name="Schneider C."/>
            <person name="Schoenbach C."/>
            <person name="Sekiguchi K."/>
            <person name="Semple C.A."/>
            <person name="Seno S."/>
            <person name="Sessa L."/>
            <person name="Sheng Y."/>
            <person name="Shibata Y."/>
            <person name="Shimada H."/>
            <person name="Shimada K."/>
            <person name="Silva D."/>
            <person name="Sinclair B."/>
            <person name="Sperling S."/>
            <person name="Stupka E."/>
            <person name="Sugiura K."/>
            <person name="Sultana R."/>
            <person name="Takenaka Y."/>
            <person name="Taki K."/>
            <person name="Tammoja K."/>
            <person name="Tan S.L."/>
            <person name="Tang S."/>
            <person name="Taylor M.S."/>
            <person name="Tegner J."/>
            <person name="Teichmann S.A."/>
            <person name="Ueda H.R."/>
            <person name="van Nimwegen E."/>
            <person name="Verardo R."/>
            <person name="Wei C.L."/>
            <person name="Yagi K."/>
            <person name="Yamanishi H."/>
            <person name="Zabarovsky E."/>
            <person name="Zhu S."/>
            <person name="Zimmer A."/>
            <person name="Hide W."/>
            <person name="Bult C."/>
            <person name="Grimmond S.M."/>
            <person name="Teasdale R.D."/>
            <person name="Liu E.T."/>
            <person name="Brusic V."/>
            <person name="Quackenbush J."/>
            <person name="Wahlestedt C."/>
            <person name="Mattick J.S."/>
            <person name="Hume D.A."/>
            <person name="Kai C."/>
            <person name="Sasaki D."/>
            <person name="Tomaru Y."/>
            <person name="Fukuda S."/>
            <person name="Kanamori-Katayama M."/>
            <person name="Suzuki M."/>
            <person name="Aoki J."/>
            <person name="Arakawa T."/>
            <person name="Iida J."/>
            <person name="Imamura K."/>
            <person name="Itoh M."/>
            <person name="Kato T."/>
            <person name="Kawaji H."/>
            <person name="Kawagashira N."/>
            <person name="Kawashima T."/>
            <person name="Kojima M."/>
            <person name="Kondo S."/>
            <person name="Konno H."/>
            <person name="Nakano K."/>
            <person name="Ninomiya N."/>
            <person name="Nishio T."/>
            <person name="Okada M."/>
            <person name="Plessy C."/>
            <person name="Shibata K."/>
            <person name="Shiraki T."/>
            <person name="Suzuki S."/>
            <person name="Tagami M."/>
            <person name="Waki K."/>
            <person name="Watahiki A."/>
            <person name="Okamura-Oho Y."/>
            <person name="Suzuki H."/>
            <person name="Kawai J."/>
            <person name="Hayashizaki Y."/>
        </authorList>
    </citation>
    <scope>NUCLEOTIDE SEQUENCE [LARGE SCALE MRNA]</scope>
    <source>
        <strain>C57BL/6J</strain>
        <tissue>Bone marrow</tissue>
        <tissue>Embryo</tissue>
        <tissue>Kidney</tissue>
        <tissue>Liver</tissue>
        <tissue>Thymus</tissue>
        <tissue>Visual cortex</tissue>
    </source>
</reference>
<reference key="3">
    <citation type="submission" date="2009-01" db="UniProtKB">
        <authorList>
            <person name="Lubec G."/>
            <person name="Kang S.U."/>
            <person name="Sunyer B."/>
            <person name="Chen W.-Q."/>
        </authorList>
    </citation>
    <scope>PROTEIN SEQUENCE OF 1-12; 14-57; 61-70; 84-117; 128-169; 196-246 AND 215-224</scope>
    <scope>IDENTIFICATION BY MASS SPECTROMETRY</scope>
    <source>
        <strain>C57BL/6J</strain>
        <strain>OF1</strain>
        <tissue>Brain</tissue>
        <tissue>Hippocampus</tissue>
    </source>
</reference>
<reference key="4">
    <citation type="journal article" date="1998" name="J. Biol. Chem.">
        <title>A novel sphingosine-dependent protein kinase (SDK1) specifically phosphorylates certain isoforms of 14-3-3 protein.</title>
        <authorList>
            <person name="Megidish T."/>
            <person name="Cooper J."/>
            <person name="Zhang L."/>
            <person name="Fu H."/>
            <person name="Hakomori S."/>
        </authorList>
    </citation>
    <scope>PHOSPHORYLATION AT SER-60</scope>
</reference>
<reference key="5">
    <citation type="journal article" date="2005" name="J. Cell Biol.">
        <title>Promotion of importin alpha-mediated nuclear import by the phosphorylation-dependent binding of cargo protein to 14-3-3.</title>
        <authorList>
            <person name="Faul C."/>
            <person name="Huettelmaier S."/>
            <person name="Oh J."/>
            <person name="Hachet V."/>
            <person name="Singer R.H."/>
            <person name="Mundel P."/>
        </authorList>
    </citation>
    <scope>INTERACTION WITH SYNPO2</scope>
</reference>
<reference key="6">
    <citation type="journal article" date="2006" name="Biochemistry">
        <title>Endogenously nitrated proteins in mouse brain: links to neurodegenerative disease.</title>
        <authorList>
            <person name="Sacksteder C.A."/>
            <person name="Qian W.-J."/>
            <person name="Knyushko T.V."/>
            <person name="Wang H."/>
            <person name="Chin M.H."/>
            <person name="Lacan G."/>
            <person name="Melega W.P."/>
            <person name="Camp D.G. II"/>
            <person name="Smith R.D."/>
            <person name="Smith D.J."/>
            <person name="Squier T.C."/>
            <person name="Bigelow D.J."/>
        </authorList>
    </citation>
    <scope>NITRATION [LARGE SCALE ANALYSIS] AT TYR-84 AND TYR-106</scope>
    <scope>IDENTIFICATION BY MASS SPECTROMETRY [LARGE SCALE ANALYSIS]</scope>
    <source>
        <tissue>Brain</tissue>
    </source>
</reference>
<reference key="7">
    <citation type="journal article" date="2008" name="Nat. Cell Biol.">
        <title>The regulated assembly of a PKCepsilon complex controls the completion of cytokinesis.</title>
        <authorList>
            <person name="Saurin A.T."/>
            <person name="Durgan J."/>
            <person name="Cameron A.J."/>
            <person name="Faisal A."/>
            <person name="Marber M.S."/>
            <person name="Parker P.J."/>
        </authorList>
    </citation>
    <scope>INTERACTION WITH PRKCE</scope>
</reference>
<reference key="8">
    <citation type="journal article" date="2010" name="Cell">
        <title>A tissue-specific atlas of mouse protein phosphorylation and expression.</title>
        <authorList>
            <person name="Huttlin E.L."/>
            <person name="Jedrychowski M.P."/>
            <person name="Elias J.E."/>
            <person name="Goswami T."/>
            <person name="Rad R."/>
            <person name="Beausoleil S.A."/>
            <person name="Villen J."/>
            <person name="Haas W."/>
            <person name="Sowa M.E."/>
            <person name="Gygi S.P."/>
        </authorList>
    </citation>
    <scope>IDENTIFICATION BY MASS SPECTROMETRY [LARGE SCALE ANALYSIS]</scope>
    <source>
        <tissue>Brain</tissue>
        <tissue>Brown adipose tissue</tissue>
        <tissue>Heart</tissue>
        <tissue>Kidney</tissue>
        <tissue>Liver</tissue>
        <tissue>Lung</tissue>
        <tissue>Pancreas</tissue>
        <tissue>Spleen</tissue>
        <tissue>Testis</tissue>
    </source>
</reference>
<reference key="9">
    <citation type="journal article" date="2010" name="Int. J. Biochem. Cell Biol.">
        <title>SLy2 targets the nuclear SAP30/HDAC1 complex.</title>
        <authorList>
            <person name="Brandt S."/>
            <person name="Ellwanger K."/>
            <person name="Beuter-Gunia C."/>
            <person name="Schuster M."/>
            <person name="Hausser A."/>
            <person name="Schmitz I."/>
            <person name="Beer-Hammer S."/>
        </authorList>
    </citation>
    <scope>INTERACTION WITH SAMSN1</scope>
</reference>
<reference key="10">
    <citation type="journal article" date="2015" name="Biochem. Biophys. Res. Commun.">
        <title>Suppression of death-associated protein kinase 2 by interaction with 14-3-3 proteins.</title>
        <authorList>
            <person name="Yuasa K."/>
            <person name="Ota R."/>
            <person name="Matsuda S."/>
            <person name="Isshiki K."/>
            <person name="Inoue M."/>
            <person name="Tsuji A."/>
        </authorList>
    </citation>
    <scope>INTERACTION WITH DAPK2</scope>
</reference>